<sequence length="375" mass="40933">MICPVIELAQQLIKRPSLSPSDAGCQEIMIQRLAAIGFTIEPMNFGDTLNFWAWRGEGETLAFAGHTDVVPTGDESHWHSPPFEPTIRDGMLYGRGAADMKGSLAAMIVAAERFVAAHPDHKGRLAFMITSDEEAKATNGTVKVVEALMARHERLDYCLVGEPSSTDRVGDIVKNGRRGSITANLRIHGVQGHVAYPHLADNPVHRAMPALNELVATQWDEGNAFFPATSMQIANLQAGTGSNNVIPGEFYVQFNFRFSTELTDSLIKQRVAALLDRHQLDYTLEWVLSGQPFLTAKGALVDAVVNAVKHYTEITPQLLTTGGTSDGRFIALMGAQVVELGPVNATIHKVNECVSAADLQLLSRMYQKIMEQLIA</sequence>
<keyword id="KW-0028">Amino-acid biosynthesis</keyword>
<keyword id="KW-0170">Cobalt</keyword>
<keyword id="KW-0220">Diaminopimelate biosynthesis</keyword>
<keyword id="KW-0378">Hydrolase</keyword>
<keyword id="KW-0457">Lysine biosynthesis</keyword>
<keyword id="KW-0479">Metal-binding</keyword>
<keyword id="KW-0862">Zinc</keyword>
<comment type="function">
    <text evidence="1">Catalyzes the hydrolysis of N-succinyl-L,L-diaminopimelic acid (SDAP), forming succinate and LL-2,6-diaminopimelate (DAP), an intermediate involved in the bacterial biosynthesis of lysine and meso-diaminopimelic acid, an essential component of bacterial cell walls.</text>
</comment>
<comment type="catalytic activity">
    <reaction evidence="1">
        <text>N-succinyl-(2S,6S)-2,6-diaminopimelate + H2O = (2S,6S)-2,6-diaminopimelate + succinate</text>
        <dbReference type="Rhea" id="RHEA:22608"/>
        <dbReference type="ChEBI" id="CHEBI:15377"/>
        <dbReference type="ChEBI" id="CHEBI:30031"/>
        <dbReference type="ChEBI" id="CHEBI:57609"/>
        <dbReference type="ChEBI" id="CHEBI:58087"/>
        <dbReference type="EC" id="3.5.1.18"/>
    </reaction>
</comment>
<comment type="cofactor">
    <cofactor evidence="1">
        <name>Zn(2+)</name>
        <dbReference type="ChEBI" id="CHEBI:29105"/>
    </cofactor>
    <cofactor evidence="1">
        <name>Co(2+)</name>
        <dbReference type="ChEBI" id="CHEBI:48828"/>
    </cofactor>
    <text evidence="1">Binds 2 Zn(2+) or Co(2+) ions per subunit.</text>
</comment>
<comment type="pathway">
    <text evidence="1">Amino-acid biosynthesis; L-lysine biosynthesis via DAP pathway; LL-2,6-diaminopimelate from (S)-tetrahydrodipicolinate (succinylase route): step 3/3.</text>
</comment>
<comment type="subunit">
    <text evidence="1">Homodimer.</text>
</comment>
<comment type="similarity">
    <text evidence="1">Belongs to the peptidase M20A family. DapE subfamily.</text>
</comment>
<accession>A4TMM3</accession>
<gene>
    <name evidence="1" type="primary">dapE</name>
    <name type="ordered locus">YPDSF_2158</name>
</gene>
<evidence type="ECO:0000255" key="1">
    <source>
        <dbReference type="HAMAP-Rule" id="MF_01690"/>
    </source>
</evidence>
<organism>
    <name type="scientific">Yersinia pestis (strain Pestoides F)</name>
    <dbReference type="NCBI Taxonomy" id="386656"/>
    <lineage>
        <taxon>Bacteria</taxon>
        <taxon>Pseudomonadati</taxon>
        <taxon>Pseudomonadota</taxon>
        <taxon>Gammaproteobacteria</taxon>
        <taxon>Enterobacterales</taxon>
        <taxon>Yersiniaceae</taxon>
        <taxon>Yersinia</taxon>
    </lineage>
</organism>
<name>DAPE_YERPP</name>
<proteinExistence type="inferred from homology"/>
<protein>
    <recommendedName>
        <fullName evidence="1">Succinyl-diaminopimelate desuccinylase</fullName>
        <shortName evidence="1">SDAP desuccinylase</shortName>
        <ecNumber evidence="1">3.5.1.18</ecNumber>
    </recommendedName>
    <alternativeName>
        <fullName evidence="1">N-succinyl-LL-2,6-diaminoheptanedioate amidohydrolase</fullName>
    </alternativeName>
</protein>
<feature type="chain" id="PRO_0000375795" description="Succinyl-diaminopimelate desuccinylase">
    <location>
        <begin position="1"/>
        <end position="375"/>
    </location>
</feature>
<feature type="active site" evidence="1">
    <location>
        <position position="68"/>
    </location>
</feature>
<feature type="active site" description="Proton acceptor" evidence="1">
    <location>
        <position position="133"/>
    </location>
</feature>
<feature type="binding site" evidence="1">
    <location>
        <position position="66"/>
    </location>
    <ligand>
        <name>Zn(2+)</name>
        <dbReference type="ChEBI" id="CHEBI:29105"/>
        <label>1</label>
    </ligand>
</feature>
<feature type="binding site" evidence="1">
    <location>
        <position position="99"/>
    </location>
    <ligand>
        <name>Zn(2+)</name>
        <dbReference type="ChEBI" id="CHEBI:29105"/>
        <label>1</label>
    </ligand>
</feature>
<feature type="binding site" evidence="1">
    <location>
        <position position="99"/>
    </location>
    <ligand>
        <name>Zn(2+)</name>
        <dbReference type="ChEBI" id="CHEBI:29105"/>
        <label>2</label>
    </ligand>
</feature>
<feature type="binding site" evidence="1">
    <location>
        <position position="134"/>
    </location>
    <ligand>
        <name>Zn(2+)</name>
        <dbReference type="ChEBI" id="CHEBI:29105"/>
        <label>2</label>
    </ligand>
</feature>
<feature type="binding site" evidence="1">
    <location>
        <position position="162"/>
    </location>
    <ligand>
        <name>Zn(2+)</name>
        <dbReference type="ChEBI" id="CHEBI:29105"/>
        <label>1</label>
    </ligand>
</feature>
<feature type="binding site" evidence="1">
    <location>
        <position position="348"/>
    </location>
    <ligand>
        <name>Zn(2+)</name>
        <dbReference type="ChEBI" id="CHEBI:29105"/>
        <label>2</label>
    </ligand>
</feature>
<reference key="1">
    <citation type="submission" date="2007-02" db="EMBL/GenBank/DDBJ databases">
        <title>Complete sequence of chromosome of Yersinia pestis Pestoides F.</title>
        <authorList>
            <consortium name="US DOE Joint Genome Institute"/>
            <person name="Copeland A."/>
            <person name="Lucas S."/>
            <person name="Lapidus A."/>
            <person name="Barry K."/>
            <person name="Detter J.C."/>
            <person name="Glavina del Rio T."/>
            <person name="Hammon N."/>
            <person name="Israni S."/>
            <person name="Dalin E."/>
            <person name="Tice H."/>
            <person name="Pitluck S."/>
            <person name="Di Bartolo G."/>
            <person name="Chain P."/>
            <person name="Malfatti S."/>
            <person name="Shin M."/>
            <person name="Vergez L."/>
            <person name="Schmutz J."/>
            <person name="Larimer F."/>
            <person name="Land M."/>
            <person name="Hauser L."/>
            <person name="Worsham P."/>
            <person name="Chu M."/>
            <person name="Bearden S."/>
            <person name="Garcia E."/>
            <person name="Richardson P."/>
        </authorList>
    </citation>
    <scope>NUCLEOTIDE SEQUENCE [LARGE SCALE GENOMIC DNA]</scope>
    <source>
        <strain>Pestoides F</strain>
    </source>
</reference>
<dbReference type="EC" id="3.5.1.18" evidence="1"/>
<dbReference type="EMBL" id="CP000668">
    <property type="protein sequence ID" value="ABP40535.1"/>
    <property type="molecule type" value="Genomic_DNA"/>
</dbReference>
<dbReference type="RefSeq" id="WP_002208549.1">
    <property type="nucleotide sequence ID" value="NZ_CP009715.1"/>
</dbReference>
<dbReference type="SMR" id="A4TMM3"/>
<dbReference type="MEROPS" id="M20.010"/>
<dbReference type="GeneID" id="57975649"/>
<dbReference type="KEGG" id="ypp:YPDSF_2158"/>
<dbReference type="PATRIC" id="fig|386656.14.peg.3637"/>
<dbReference type="UniPathway" id="UPA00034">
    <property type="reaction ID" value="UER00021"/>
</dbReference>
<dbReference type="GO" id="GO:0008777">
    <property type="term" value="F:acetylornithine deacetylase activity"/>
    <property type="evidence" value="ECO:0007669"/>
    <property type="project" value="TreeGrafter"/>
</dbReference>
<dbReference type="GO" id="GO:0050897">
    <property type="term" value="F:cobalt ion binding"/>
    <property type="evidence" value="ECO:0007669"/>
    <property type="project" value="UniProtKB-UniRule"/>
</dbReference>
<dbReference type="GO" id="GO:0009014">
    <property type="term" value="F:succinyl-diaminopimelate desuccinylase activity"/>
    <property type="evidence" value="ECO:0007669"/>
    <property type="project" value="UniProtKB-UniRule"/>
</dbReference>
<dbReference type="GO" id="GO:0008270">
    <property type="term" value="F:zinc ion binding"/>
    <property type="evidence" value="ECO:0007669"/>
    <property type="project" value="UniProtKB-UniRule"/>
</dbReference>
<dbReference type="GO" id="GO:0019877">
    <property type="term" value="P:diaminopimelate biosynthetic process"/>
    <property type="evidence" value="ECO:0007669"/>
    <property type="project" value="UniProtKB-UniRule"/>
</dbReference>
<dbReference type="GO" id="GO:0006526">
    <property type="term" value="P:L-arginine biosynthetic process"/>
    <property type="evidence" value="ECO:0007669"/>
    <property type="project" value="TreeGrafter"/>
</dbReference>
<dbReference type="GO" id="GO:0009089">
    <property type="term" value="P:lysine biosynthetic process via diaminopimelate"/>
    <property type="evidence" value="ECO:0007669"/>
    <property type="project" value="UniProtKB-UniRule"/>
</dbReference>
<dbReference type="CDD" id="cd03891">
    <property type="entry name" value="M20_DapE_proteobac"/>
    <property type="match status" value="1"/>
</dbReference>
<dbReference type="FunFam" id="3.30.70.360:FF:000011">
    <property type="entry name" value="Succinyl-diaminopimelate desuccinylase"/>
    <property type="match status" value="1"/>
</dbReference>
<dbReference type="FunFam" id="3.40.630.10:FF:000005">
    <property type="entry name" value="Succinyl-diaminopimelate desuccinylase"/>
    <property type="match status" value="1"/>
</dbReference>
<dbReference type="FunFam" id="3.40.630.10:FF:000010">
    <property type="entry name" value="Succinyl-diaminopimelate desuccinylase"/>
    <property type="match status" value="1"/>
</dbReference>
<dbReference type="Gene3D" id="3.40.630.10">
    <property type="entry name" value="Zn peptidases"/>
    <property type="match status" value="2"/>
</dbReference>
<dbReference type="HAMAP" id="MF_01690">
    <property type="entry name" value="DapE"/>
    <property type="match status" value="1"/>
</dbReference>
<dbReference type="InterPro" id="IPR001261">
    <property type="entry name" value="ArgE/DapE_CS"/>
</dbReference>
<dbReference type="InterPro" id="IPR036264">
    <property type="entry name" value="Bact_exopeptidase_dim_dom"/>
</dbReference>
<dbReference type="InterPro" id="IPR005941">
    <property type="entry name" value="DapE_proteobac"/>
</dbReference>
<dbReference type="InterPro" id="IPR002933">
    <property type="entry name" value="Peptidase_M20"/>
</dbReference>
<dbReference type="InterPro" id="IPR011650">
    <property type="entry name" value="Peptidase_M20_dimer"/>
</dbReference>
<dbReference type="InterPro" id="IPR050072">
    <property type="entry name" value="Peptidase_M20A"/>
</dbReference>
<dbReference type="NCBIfam" id="TIGR01246">
    <property type="entry name" value="dapE_proteo"/>
    <property type="match status" value="1"/>
</dbReference>
<dbReference type="NCBIfam" id="NF009557">
    <property type="entry name" value="PRK13009.1"/>
    <property type="match status" value="1"/>
</dbReference>
<dbReference type="PANTHER" id="PTHR43808">
    <property type="entry name" value="ACETYLORNITHINE DEACETYLASE"/>
    <property type="match status" value="1"/>
</dbReference>
<dbReference type="PANTHER" id="PTHR43808:SF31">
    <property type="entry name" value="N-ACETYL-L-CITRULLINE DEACETYLASE"/>
    <property type="match status" value="1"/>
</dbReference>
<dbReference type="Pfam" id="PF07687">
    <property type="entry name" value="M20_dimer"/>
    <property type="match status" value="1"/>
</dbReference>
<dbReference type="Pfam" id="PF01546">
    <property type="entry name" value="Peptidase_M20"/>
    <property type="match status" value="1"/>
</dbReference>
<dbReference type="SUPFAM" id="SSF55031">
    <property type="entry name" value="Bacterial exopeptidase dimerisation domain"/>
    <property type="match status" value="1"/>
</dbReference>
<dbReference type="SUPFAM" id="SSF53187">
    <property type="entry name" value="Zn-dependent exopeptidases"/>
    <property type="match status" value="1"/>
</dbReference>
<dbReference type="PROSITE" id="PS00758">
    <property type="entry name" value="ARGE_DAPE_CPG2_1"/>
    <property type="match status" value="1"/>
</dbReference>